<reference key="1">
    <citation type="journal article" date="2008" name="Nucleic Acids Res.">
        <title>The complete nucleotide sequences of the five genetically distinct plastid genomes of Oenothera, subsection Oenothera: I. Sequence evaluation and plastome evolution.</title>
        <authorList>
            <person name="Greiner S."/>
            <person name="Wang X."/>
            <person name="Rauwolf U."/>
            <person name="Silber M.V."/>
            <person name="Mayer K."/>
            <person name="Meurer J."/>
            <person name="Haberer G."/>
            <person name="Herrmann R.G."/>
        </authorList>
    </citation>
    <scope>NUCLEOTIDE SEQUENCE [LARGE SCALE GENOMIC DNA]</scope>
    <source>
        <strain>cv. Atrovirens</strain>
    </source>
</reference>
<dbReference type="EMBL" id="EU262891">
    <property type="protein sequence ID" value="ABX10126.1"/>
    <property type="molecule type" value="Genomic_DNA"/>
</dbReference>
<dbReference type="RefSeq" id="YP_001687456.1">
    <property type="nucleotide sequence ID" value="NC_010362.1"/>
</dbReference>
<dbReference type="SMR" id="B0Z5D3"/>
<dbReference type="GeneID" id="5955380"/>
<dbReference type="GO" id="GO:0009535">
    <property type="term" value="C:chloroplast thylakoid membrane"/>
    <property type="evidence" value="ECO:0007669"/>
    <property type="project" value="UniProtKB-SubCell"/>
</dbReference>
<dbReference type="GO" id="GO:0045259">
    <property type="term" value="C:proton-transporting ATP synthase complex"/>
    <property type="evidence" value="ECO:0007669"/>
    <property type="project" value="UniProtKB-KW"/>
</dbReference>
<dbReference type="GO" id="GO:0046933">
    <property type="term" value="F:proton-transporting ATP synthase activity, rotational mechanism"/>
    <property type="evidence" value="ECO:0007669"/>
    <property type="project" value="UniProtKB-UniRule"/>
</dbReference>
<dbReference type="CDD" id="cd06503">
    <property type="entry name" value="ATP-synt_Fo_b"/>
    <property type="match status" value="1"/>
</dbReference>
<dbReference type="HAMAP" id="MF_01398">
    <property type="entry name" value="ATP_synth_b_bprime"/>
    <property type="match status" value="1"/>
</dbReference>
<dbReference type="InterPro" id="IPR002146">
    <property type="entry name" value="ATP_synth_b/b'su_bac/chlpt"/>
</dbReference>
<dbReference type="PANTHER" id="PTHR34264">
    <property type="entry name" value="ATP SYNTHASE SUBUNIT B, CHLOROPLASTIC"/>
    <property type="match status" value="1"/>
</dbReference>
<dbReference type="PANTHER" id="PTHR34264:SF3">
    <property type="entry name" value="ATP SYNTHASE SUBUNIT B, CHLOROPLASTIC"/>
    <property type="match status" value="1"/>
</dbReference>
<dbReference type="Pfam" id="PF00430">
    <property type="entry name" value="ATP-synt_B"/>
    <property type="match status" value="1"/>
</dbReference>
<proteinExistence type="inferred from homology"/>
<keyword id="KW-0066">ATP synthesis</keyword>
<keyword id="KW-0138">CF(0)</keyword>
<keyword id="KW-0150">Chloroplast</keyword>
<keyword id="KW-0375">Hydrogen ion transport</keyword>
<keyword id="KW-0406">Ion transport</keyword>
<keyword id="KW-0472">Membrane</keyword>
<keyword id="KW-0934">Plastid</keyword>
<keyword id="KW-0793">Thylakoid</keyword>
<keyword id="KW-0812">Transmembrane</keyword>
<keyword id="KW-1133">Transmembrane helix</keyword>
<keyword id="KW-0813">Transport</keyword>
<accession>B0Z5D3</accession>
<evidence type="ECO:0000255" key="1">
    <source>
        <dbReference type="HAMAP-Rule" id="MF_01398"/>
    </source>
</evidence>
<gene>
    <name evidence="1" type="primary">atpF</name>
</gene>
<geneLocation type="chloroplast"/>
<name>ATPF_OENPA</name>
<comment type="function">
    <text evidence="1">F(1)F(0) ATP synthase produces ATP from ADP in the presence of a proton or sodium gradient. F-type ATPases consist of two structural domains, F(1) containing the extramembraneous catalytic core and F(0) containing the membrane proton channel, linked together by a central stalk and a peripheral stalk. During catalysis, ATP synthesis in the catalytic domain of F(1) is coupled via a rotary mechanism of the central stalk subunits to proton translocation.</text>
</comment>
<comment type="function">
    <text evidence="1">Component of the F(0) channel, it forms part of the peripheral stalk, linking F(1) to F(0).</text>
</comment>
<comment type="subunit">
    <text evidence="1">F-type ATPases have 2 components, F(1) - the catalytic core - and F(0) - the membrane proton channel. F(1) has five subunits: alpha(3), beta(3), gamma(1), delta(1), epsilon(1). F(0) has four main subunits: a(1), b(1), b'(1) and c(10-14). The alpha and beta chains form an alternating ring which encloses part of the gamma chain. F(1) is attached to F(0) by a central stalk formed by the gamma and epsilon chains, while a peripheral stalk is formed by the delta, b and b' chains.</text>
</comment>
<comment type="subcellular location">
    <subcellularLocation>
        <location evidence="1">Plastid</location>
        <location evidence="1">Chloroplast thylakoid membrane</location>
        <topology evidence="1">Single-pass membrane protein</topology>
    </subcellularLocation>
</comment>
<comment type="miscellaneous">
    <text>In plastids the F-type ATPase is also known as CF(1)CF(0).</text>
</comment>
<comment type="similarity">
    <text evidence="1">Belongs to the ATPase B chain family.</text>
</comment>
<sequence>MKNVTDSFVSLVHWPSAGSFGFNTDILATNPINLSVVLGVLIFFGKGVLSDLLDNRKQRILNTIRNSEELREGAIEQLEKARARLQDVQIEAEGYRAYGYFGIDEQRHESINSTYKTLEQLENNKNESIHFEQQRAINQVRQQIFQQALQGALGTLNSCLNNELHLRTISANIGLFGSMKELTD</sequence>
<protein>
    <recommendedName>
        <fullName evidence="1">ATP synthase subunit b, chloroplastic</fullName>
    </recommendedName>
    <alternativeName>
        <fullName evidence="1">ATP synthase F(0) sector subunit b</fullName>
    </alternativeName>
    <alternativeName>
        <fullName evidence="1">ATPase subunit I</fullName>
    </alternativeName>
</protein>
<feature type="chain" id="PRO_0000368962" description="ATP synthase subunit b, chloroplastic">
    <location>
        <begin position="1"/>
        <end position="184"/>
    </location>
</feature>
<feature type="transmembrane region" description="Helical" evidence="1">
    <location>
        <begin position="27"/>
        <end position="49"/>
    </location>
</feature>
<organism>
    <name type="scientific">Oenothera parviflora</name>
    <name type="common">Small-flowered evening primrose</name>
    <name type="synonym">Oenothera cruciata</name>
    <dbReference type="NCBI Taxonomy" id="482429"/>
    <lineage>
        <taxon>Eukaryota</taxon>
        <taxon>Viridiplantae</taxon>
        <taxon>Streptophyta</taxon>
        <taxon>Embryophyta</taxon>
        <taxon>Tracheophyta</taxon>
        <taxon>Spermatophyta</taxon>
        <taxon>Magnoliopsida</taxon>
        <taxon>eudicotyledons</taxon>
        <taxon>Gunneridae</taxon>
        <taxon>Pentapetalae</taxon>
        <taxon>rosids</taxon>
        <taxon>malvids</taxon>
        <taxon>Myrtales</taxon>
        <taxon>Onagraceae</taxon>
        <taxon>Onagroideae</taxon>
        <taxon>Onagreae</taxon>
        <taxon>Oenothera</taxon>
    </lineage>
</organism>